<gene>
    <name type="primary">sapC</name>
    <name type="ordered locus">STY1357</name>
    <name type="ordered locus">t1608</name>
</gene>
<dbReference type="EMBL" id="AL513382">
    <property type="protein sequence ID" value="CAD01626.1"/>
    <property type="molecule type" value="Genomic_DNA"/>
</dbReference>
<dbReference type="EMBL" id="AE014613">
    <property type="protein sequence ID" value="AAO69235.1"/>
    <property type="molecule type" value="Genomic_DNA"/>
</dbReference>
<dbReference type="RefSeq" id="NP_455802.1">
    <property type="nucleotide sequence ID" value="NC_003198.1"/>
</dbReference>
<dbReference type="RefSeq" id="WP_001146150.1">
    <property type="nucleotide sequence ID" value="NZ_WSUR01000006.1"/>
</dbReference>
<dbReference type="SMR" id="P0A2J6"/>
<dbReference type="STRING" id="220341.gene:17585316"/>
<dbReference type="KEGG" id="stt:t1608"/>
<dbReference type="KEGG" id="sty:STY1357"/>
<dbReference type="PATRIC" id="fig|220341.7.peg.1367"/>
<dbReference type="eggNOG" id="COG4171">
    <property type="taxonomic scope" value="Bacteria"/>
</dbReference>
<dbReference type="HOGENOM" id="CLU_028518_1_1_6"/>
<dbReference type="OMA" id="MFGLWCL"/>
<dbReference type="OrthoDB" id="9805884at2"/>
<dbReference type="Proteomes" id="UP000000541">
    <property type="component" value="Chromosome"/>
</dbReference>
<dbReference type="Proteomes" id="UP000002670">
    <property type="component" value="Chromosome"/>
</dbReference>
<dbReference type="GO" id="GO:0005886">
    <property type="term" value="C:plasma membrane"/>
    <property type="evidence" value="ECO:0007669"/>
    <property type="project" value="UniProtKB-SubCell"/>
</dbReference>
<dbReference type="GO" id="GO:0015833">
    <property type="term" value="P:peptide transport"/>
    <property type="evidence" value="ECO:0007669"/>
    <property type="project" value="UniProtKB-KW"/>
</dbReference>
<dbReference type="GO" id="GO:0015031">
    <property type="term" value="P:protein transport"/>
    <property type="evidence" value="ECO:0007669"/>
    <property type="project" value="UniProtKB-KW"/>
</dbReference>
<dbReference type="GO" id="GO:0055085">
    <property type="term" value="P:transmembrane transport"/>
    <property type="evidence" value="ECO:0007669"/>
    <property type="project" value="InterPro"/>
</dbReference>
<dbReference type="CDD" id="cd06261">
    <property type="entry name" value="TM_PBP2"/>
    <property type="match status" value="1"/>
</dbReference>
<dbReference type="FunFam" id="1.10.3720.10:FF:000019">
    <property type="entry name" value="Antimicrobial peptide ABC transporter permease SapC"/>
    <property type="match status" value="1"/>
</dbReference>
<dbReference type="Gene3D" id="1.10.3720.10">
    <property type="entry name" value="MetI-like"/>
    <property type="match status" value="1"/>
</dbReference>
<dbReference type="InterPro" id="IPR050366">
    <property type="entry name" value="BP-dependent_transpt_permease"/>
</dbReference>
<dbReference type="InterPro" id="IPR000515">
    <property type="entry name" value="MetI-like"/>
</dbReference>
<dbReference type="InterPro" id="IPR035906">
    <property type="entry name" value="MetI-like_sf"/>
</dbReference>
<dbReference type="InterPro" id="IPR025966">
    <property type="entry name" value="OppC_N"/>
</dbReference>
<dbReference type="NCBIfam" id="NF011691">
    <property type="entry name" value="PRK15111.1"/>
    <property type="match status" value="1"/>
</dbReference>
<dbReference type="PANTHER" id="PTHR43386">
    <property type="entry name" value="OLIGOPEPTIDE TRANSPORT SYSTEM PERMEASE PROTEIN APPC"/>
    <property type="match status" value="1"/>
</dbReference>
<dbReference type="PANTHER" id="PTHR43386:SF5">
    <property type="entry name" value="PUTRESCINE EXPORT SYSTEM PERMEASE PROTEIN SAPC"/>
    <property type="match status" value="1"/>
</dbReference>
<dbReference type="Pfam" id="PF00528">
    <property type="entry name" value="BPD_transp_1"/>
    <property type="match status" value="1"/>
</dbReference>
<dbReference type="Pfam" id="PF12911">
    <property type="entry name" value="OppC_N"/>
    <property type="match status" value="1"/>
</dbReference>
<dbReference type="SUPFAM" id="SSF161098">
    <property type="entry name" value="MetI-like"/>
    <property type="match status" value="1"/>
</dbReference>
<dbReference type="PROSITE" id="PS50928">
    <property type="entry name" value="ABC_TM1"/>
    <property type="match status" value="1"/>
</dbReference>
<accession>P0A2J6</accession>
<accession>P36669</accession>
<keyword id="KW-0997">Cell inner membrane</keyword>
<keyword id="KW-1003">Cell membrane</keyword>
<keyword id="KW-0472">Membrane</keyword>
<keyword id="KW-0571">Peptide transport</keyword>
<keyword id="KW-0653">Protein transport</keyword>
<keyword id="KW-0812">Transmembrane</keyword>
<keyword id="KW-1133">Transmembrane helix</keyword>
<keyword id="KW-0813">Transport</keyword>
<organism>
    <name type="scientific">Salmonella typhi</name>
    <dbReference type="NCBI Taxonomy" id="90370"/>
    <lineage>
        <taxon>Bacteria</taxon>
        <taxon>Pseudomonadati</taxon>
        <taxon>Pseudomonadota</taxon>
        <taxon>Gammaproteobacteria</taxon>
        <taxon>Enterobacterales</taxon>
        <taxon>Enterobacteriaceae</taxon>
        <taxon>Salmonella</taxon>
    </lineage>
</organism>
<name>SAPC_SALTI</name>
<comment type="function">
    <text evidence="1">Involved in a peptide intake transport system that plays a role in the resistance to antimicrobial peptides.</text>
</comment>
<comment type="subcellular location">
    <subcellularLocation>
        <location evidence="1">Cell inner membrane</location>
        <topology evidence="3">Multi-pass membrane protein</topology>
    </subcellularLocation>
</comment>
<comment type="similarity">
    <text evidence="4">Belongs to the binding-protein-dependent transport system permease family. OppBC subfamily.</text>
</comment>
<evidence type="ECO:0000250" key="1"/>
<evidence type="ECO:0000255" key="2"/>
<evidence type="ECO:0000255" key="3">
    <source>
        <dbReference type="PROSITE-ProRule" id="PRU00441"/>
    </source>
</evidence>
<evidence type="ECO:0000305" key="4"/>
<feature type="chain" id="PRO_0000060165" description="Peptide transport system permease protein SapC">
    <location>
        <begin position="1"/>
        <end position="296"/>
    </location>
</feature>
<feature type="topological domain" description="Cytoplasmic" evidence="2">
    <location>
        <begin position="1"/>
        <end position="28"/>
    </location>
</feature>
<feature type="transmembrane region" description="Helical" evidence="3">
    <location>
        <begin position="29"/>
        <end position="49"/>
    </location>
</feature>
<feature type="topological domain" description="Periplasmic" evidence="2">
    <location>
        <begin position="50"/>
        <end position="98"/>
    </location>
</feature>
<feature type="transmembrane region" description="Helical" evidence="3">
    <location>
        <begin position="99"/>
        <end position="119"/>
    </location>
</feature>
<feature type="topological domain" description="Cytoplasmic" evidence="2">
    <location>
        <begin position="120"/>
        <end position="133"/>
    </location>
</feature>
<feature type="transmembrane region" description="Helical" evidence="3">
    <location>
        <begin position="134"/>
        <end position="154"/>
    </location>
</feature>
<feature type="topological domain" description="Periplasmic" evidence="2">
    <location>
        <begin position="155"/>
        <end position="196"/>
    </location>
</feature>
<feature type="transmembrane region" description="Helical" evidence="3">
    <location>
        <begin position="197"/>
        <end position="217"/>
    </location>
</feature>
<feature type="topological domain" description="Cytoplasmic" evidence="2">
    <location>
        <begin position="218"/>
        <end position="222"/>
    </location>
</feature>
<feature type="transmembrane region" description="Helical" evidence="3">
    <location>
        <begin position="223"/>
        <end position="243"/>
    </location>
</feature>
<feature type="topological domain" description="Periplasmic" evidence="2">
    <location>
        <begin position="244"/>
        <end position="257"/>
    </location>
</feature>
<feature type="transmembrane region" description="Helical" evidence="3">
    <location>
        <begin position="258"/>
        <end position="278"/>
    </location>
</feature>
<feature type="topological domain" description="Cytoplasmic" evidence="2">
    <location>
        <begin position="279"/>
        <end position="296"/>
    </location>
</feature>
<feature type="domain" description="ABC transmembrane type-1" evidence="3">
    <location>
        <begin position="99"/>
        <end position="284"/>
    </location>
</feature>
<protein>
    <recommendedName>
        <fullName>Peptide transport system permease protein SapC</fullName>
    </recommendedName>
</protein>
<reference key="1">
    <citation type="journal article" date="2001" name="Nature">
        <title>Complete genome sequence of a multiple drug resistant Salmonella enterica serovar Typhi CT18.</title>
        <authorList>
            <person name="Parkhill J."/>
            <person name="Dougan G."/>
            <person name="James K.D."/>
            <person name="Thomson N.R."/>
            <person name="Pickard D."/>
            <person name="Wain J."/>
            <person name="Churcher C.M."/>
            <person name="Mungall K.L."/>
            <person name="Bentley S.D."/>
            <person name="Holden M.T.G."/>
            <person name="Sebaihia M."/>
            <person name="Baker S."/>
            <person name="Basham D."/>
            <person name="Brooks K."/>
            <person name="Chillingworth T."/>
            <person name="Connerton P."/>
            <person name="Cronin A."/>
            <person name="Davis P."/>
            <person name="Davies R.M."/>
            <person name="Dowd L."/>
            <person name="White N."/>
            <person name="Farrar J."/>
            <person name="Feltwell T."/>
            <person name="Hamlin N."/>
            <person name="Haque A."/>
            <person name="Hien T.T."/>
            <person name="Holroyd S."/>
            <person name="Jagels K."/>
            <person name="Krogh A."/>
            <person name="Larsen T.S."/>
            <person name="Leather S."/>
            <person name="Moule S."/>
            <person name="O'Gaora P."/>
            <person name="Parry C."/>
            <person name="Quail M.A."/>
            <person name="Rutherford K.M."/>
            <person name="Simmonds M."/>
            <person name="Skelton J."/>
            <person name="Stevens K."/>
            <person name="Whitehead S."/>
            <person name="Barrell B.G."/>
        </authorList>
    </citation>
    <scope>NUCLEOTIDE SEQUENCE [LARGE SCALE GENOMIC DNA]</scope>
    <source>
        <strain>CT18</strain>
    </source>
</reference>
<reference key="2">
    <citation type="journal article" date="2003" name="J. Bacteriol.">
        <title>Comparative genomics of Salmonella enterica serovar Typhi strains Ty2 and CT18.</title>
        <authorList>
            <person name="Deng W."/>
            <person name="Liou S.-R."/>
            <person name="Plunkett G. III"/>
            <person name="Mayhew G.F."/>
            <person name="Rose D.J."/>
            <person name="Burland V."/>
            <person name="Kodoyianni V."/>
            <person name="Schwartz D.C."/>
            <person name="Blattner F.R."/>
        </authorList>
    </citation>
    <scope>NUCLEOTIDE SEQUENCE [LARGE SCALE GENOMIC DNA]</scope>
    <source>
        <strain>ATCC 700931 / Ty2</strain>
    </source>
</reference>
<sequence length="296" mass="31548">MPYDSVYSEKRPPGTLRTAWRKFYSDAPAMVGLYGCAGLALLCIFGGWIAPYGIDQQFLGYQLLPPSWSRYGEVSFFLGTDDLGRDVLSRLLSGAAPTVGGAFIVTLAATLCGLVLGVVAGATHGLRSAVLNHILDTLLSIPSLLLAIIVVAFAGPHLSHAMFAVWLALLPRMVRSVYSMVHDELEKEYVIAARLDGATTLNILWFAILPNITAGLVTEITRALSMAILDIAALGFLDLGAQLPSPEWGAMLGDALELIYVAPWTVMLPGAAITLSVLLVNLLGDGIRRAIIAGVE</sequence>
<proteinExistence type="inferred from homology"/>